<dbReference type="EC" id="7.1.1.-" evidence="1"/>
<dbReference type="EMBL" id="CP000738">
    <property type="protein sequence ID" value="ABR59744.1"/>
    <property type="molecule type" value="Genomic_DNA"/>
</dbReference>
<dbReference type="RefSeq" id="WP_011975082.1">
    <property type="nucleotide sequence ID" value="NC_009636.1"/>
</dbReference>
<dbReference type="RefSeq" id="YP_001326579.1">
    <property type="nucleotide sequence ID" value="NC_009636.1"/>
</dbReference>
<dbReference type="SMR" id="A6U7W4"/>
<dbReference type="STRING" id="366394.Smed_0889"/>
<dbReference type="KEGG" id="smd:Smed_0889"/>
<dbReference type="PATRIC" id="fig|366394.8.peg.4003"/>
<dbReference type="eggNOG" id="COG0377">
    <property type="taxonomic scope" value="Bacteria"/>
</dbReference>
<dbReference type="HOGENOM" id="CLU_055737_7_3_5"/>
<dbReference type="OrthoDB" id="9786737at2"/>
<dbReference type="Proteomes" id="UP000001108">
    <property type="component" value="Chromosome"/>
</dbReference>
<dbReference type="GO" id="GO:0005886">
    <property type="term" value="C:plasma membrane"/>
    <property type="evidence" value="ECO:0007669"/>
    <property type="project" value="UniProtKB-SubCell"/>
</dbReference>
<dbReference type="GO" id="GO:0045271">
    <property type="term" value="C:respiratory chain complex I"/>
    <property type="evidence" value="ECO:0007669"/>
    <property type="project" value="TreeGrafter"/>
</dbReference>
<dbReference type="GO" id="GO:0051539">
    <property type="term" value="F:4 iron, 4 sulfur cluster binding"/>
    <property type="evidence" value="ECO:0007669"/>
    <property type="project" value="UniProtKB-KW"/>
</dbReference>
<dbReference type="GO" id="GO:0005506">
    <property type="term" value="F:iron ion binding"/>
    <property type="evidence" value="ECO:0007669"/>
    <property type="project" value="UniProtKB-UniRule"/>
</dbReference>
<dbReference type="GO" id="GO:0008137">
    <property type="term" value="F:NADH dehydrogenase (ubiquinone) activity"/>
    <property type="evidence" value="ECO:0007669"/>
    <property type="project" value="InterPro"/>
</dbReference>
<dbReference type="GO" id="GO:0050136">
    <property type="term" value="F:NADH:ubiquinone reductase (non-electrogenic) activity"/>
    <property type="evidence" value="ECO:0007669"/>
    <property type="project" value="UniProtKB-UniRule"/>
</dbReference>
<dbReference type="GO" id="GO:0048038">
    <property type="term" value="F:quinone binding"/>
    <property type="evidence" value="ECO:0007669"/>
    <property type="project" value="UniProtKB-KW"/>
</dbReference>
<dbReference type="GO" id="GO:0009060">
    <property type="term" value="P:aerobic respiration"/>
    <property type="evidence" value="ECO:0007669"/>
    <property type="project" value="TreeGrafter"/>
</dbReference>
<dbReference type="GO" id="GO:0015990">
    <property type="term" value="P:electron transport coupled proton transport"/>
    <property type="evidence" value="ECO:0007669"/>
    <property type="project" value="TreeGrafter"/>
</dbReference>
<dbReference type="FunFam" id="3.40.50.12280:FF:000001">
    <property type="entry name" value="NADH-quinone oxidoreductase subunit B 2"/>
    <property type="match status" value="1"/>
</dbReference>
<dbReference type="Gene3D" id="3.40.50.12280">
    <property type="match status" value="1"/>
</dbReference>
<dbReference type="HAMAP" id="MF_01356">
    <property type="entry name" value="NDH1_NuoB"/>
    <property type="match status" value="1"/>
</dbReference>
<dbReference type="InterPro" id="IPR006137">
    <property type="entry name" value="NADH_UbQ_OxRdtase-like_20kDa"/>
</dbReference>
<dbReference type="InterPro" id="IPR006138">
    <property type="entry name" value="NADH_UQ_OxRdtase_20Kd_su"/>
</dbReference>
<dbReference type="NCBIfam" id="TIGR01957">
    <property type="entry name" value="nuoB_fam"/>
    <property type="match status" value="1"/>
</dbReference>
<dbReference type="NCBIfam" id="NF005012">
    <property type="entry name" value="PRK06411.1"/>
    <property type="match status" value="1"/>
</dbReference>
<dbReference type="PANTHER" id="PTHR11995">
    <property type="entry name" value="NADH DEHYDROGENASE"/>
    <property type="match status" value="1"/>
</dbReference>
<dbReference type="PANTHER" id="PTHR11995:SF14">
    <property type="entry name" value="NADH DEHYDROGENASE [UBIQUINONE] IRON-SULFUR PROTEIN 7, MITOCHONDRIAL"/>
    <property type="match status" value="1"/>
</dbReference>
<dbReference type="Pfam" id="PF01058">
    <property type="entry name" value="Oxidored_q6"/>
    <property type="match status" value="1"/>
</dbReference>
<dbReference type="SUPFAM" id="SSF56770">
    <property type="entry name" value="HydA/Nqo6-like"/>
    <property type="match status" value="1"/>
</dbReference>
<dbReference type="PROSITE" id="PS01150">
    <property type="entry name" value="COMPLEX1_20K"/>
    <property type="match status" value="1"/>
</dbReference>
<name>NUOB_SINMW</name>
<evidence type="ECO:0000255" key="1">
    <source>
        <dbReference type="HAMAP-Rule" id="MF_01356"/>
    </source>
</evidence>
<accession>A6U7W4</accession>
<comment type="function">
    <text evidence="1">NDH-1 shuttles electrons from NADH, via FMN and iron-sulfur (Fe-S) centers, to quinones in the respiratory chain. The immediate electron acceptor for the enzyme in this species is believed to be ubiquinone. Couples the redox reaction to proton translocation (for every two electrons transferred, four hydrogen ions are translocated across the cytoplasmic membrane), and thus conserves the redox energy in a proton gradient.</text>
</comment>
<comment type="catalytic activity">
    <reaction evidence="1">
        <text>a quinone + NADH + 5 H(+)(in) = a quinol + NAD(+) + 4 H(+)(out)</text>
        <dbReference type="Rhea" id="RHEA:57888"/>
        <dbReference type="ChEBI" id="CHEBI:15378"/>
        <dbReference type="ChEBI" id="CHEBI:24646"/>
        <dbReference type="ChEBI" id="CHEBI:57540"/>
        <dbReference type="ChEBI" id="CHEBI:57945"/>
        <dbReference type="ChEBI" id="CHEBI:132124"/>
    </reaction>
</comment>
<comment type="cofactor">
    <cofactor evidence="1">
        <name>[4Fe-4S] cluster</name>
        <dbReference type="ChEBI" id="CHEBI:49883"/>
    </cofactor>
    <text evidence="1">Binds 1 [4Fe-4S] cluster.</text>
</comment>
<comment type="subunit">
    <text evidence="1">NDH-1 is composed of 14 different subunits. Subunits NuoB, C, D, E, F, and G constitute the peripheral sector of the complex.</text>
</comment>
<comment type="subcellular location">
    <subcellularLocation>
        <location evidence="1">Cell inner membrane</location>
        <topology evidence="1">Peripheral membrane protein</topology>
        <orientation evidence="1">Cytoplasmic side</orientation>
    </subcellularLocation>
</comment>
<comment type="similarity">
    <text evidence="1">Belongs to the complex I 20 kDa subunit family.</text>
</comment>
<keyword id="KW-0004">4Fe-4S</keyword>
<keyword id="KW-0997">Cell inner membrane</keyword>
<keyword id="KW-1003">Cell membrane</keyword>
<keyword id="KW-0408">Iron</keyword>
<keyword id="KW-0411">Iron-sulfur</keyword>
<keyword id="KW-0472">Membrane</keyword>
<keyword id="KW-0479">Metal-binding</keyword>
<keyword id="KW-0520">NAD</keyword>
<keyword id="KW-0874">Quinone</keyword>
<keyword id="KW-1278">Translocase</keyword>
<keyword id="KW-0813">Transport</keyword>
<keyword id="KW-0830">Ubiquinone</keyword>
<sequence>MELASGTTLVAPQPKGILDPATGKPIGSNDAFFGEINNELADKGFLVTSTDELITWARTGSLMWMTFGLACCAVEMMQMSMPRYDAERFGFAPRASPRQSDVMIVAGTLTNKMAPALRKVYDQMPEPRYVISMGSCANGGGYYHYSYSVVRGCDRVVPVDIYVPGCPPTAEALLYGVLLLQKKIRRTGTIER</sequence>
<feature type="chain" id="PRO_0000376380" description="NADH-quinone oxidoreductase subunit B">
    <location>
        <begin position="1"/>
        <end position="192"/>
    </location>
</feature>
<feature type="binding site" evidence="1">
    <location>
        <position position="71"/>
    </location>
    <ligand>
        <name>[4Fe-4S] cluster</name>
        <dbReference type="ChEBI" id="CHEBI:49883"/>
    </ligand>
</feature>
<feature type="binding site" evidence="1">
    <location>
        <position position="72"/>
    </location>
    <ligand>
        <name>[4Fe-4S] cluster</name>
        <dbReference type="ChEBI" id="CHEBI:49883"/>
    </ligand>
</feature>
<feature type="binding site" evidence="1">
    <location>
        <position position="136"/>
    </location>
    <ligand>
        <name>[4Fe-4S] cluster</name>
        <dbReference type="ChEBI" id="CHEBI:49883"/>
    </ligand>
</feature>
<feature type="binding site" evidence="1">
    <location>
        <position position="166"/>
    </location>
    <ligand>
        <name>[4Fe-4S] cluster</name>
        <dbReference type="ChEBI" id="CHEBI:49883"/>
    </ligand>
</feature>
<proteinExistence type="inferred from homology"/>
<organism>
    <name type="scientific">Sinorhizobium medicae (strain WSM419)</name>
    <name type="common">Ensifer medicae</name>
    <dbReference type="NCBI Taxonomy" id="366394"/>
    <lineage>
        <taxon>Bacteria</taxon>
        <taxon>Pseudomonadati</taxon>
        <taxon>Pseudomonadota</taxon>
        <taxon>Alphaproteobacteria</taxon>
        <taxon>Hyphomicrobiales</taxon>
        <taxon>Rhizobiaceae</taxon>
        <taxon>Sinorhizobium/Ensifer group</taxon>
        <taxon>Sinorhizobium</taxon>
    </lineage>
</organism>
<protein>
    <recommendedName>
        <fullName evidence="1">NADH-quinone oxidoreductase subunit B</fullName>
        <ecNumber evidence="1">7.1.1.-</ecNumber>
    </recommendedName>
    <alternativeName>
        <fullName evidence="1">NADH dehydrogenase I subunit B</fullName>
    </alternativeName>
    <alternativeName>
        <fullName evidence="1">NDH-1 subunit B</fullName>
    </alternativeName>
</protein>
<reference key="1">
    <citation type="submission" date="2007-06" db="EMBL/GenBank/DDBJ databases">
        <title>Complete sequence of Sinorhizobium medicae WSM419 chromosome.</title>
        <authorList>
            <consortium name="US DOE Joint Genome Institute"/>
            <person name="Copeland A."/>
            <person name="Lucas S."/>
            <person name="Lapidus A."/>
            <person name="Barry K."/>
            <person name="Glavina del Rio T."/>
            <person name="Dalin E."/>
            <person name="Tice H."/>
            <person name="Pitluck S."/>
            <person name="Chain P."/>
            <person name="Malfatti S."/>
            <person name="Shin M."/>
            <person name="Vergez L."/>
            <person name="Schmutz J."/>
            <person name="Larimer F."/>
            <person name="Land M."/>
            <person name="Hauser L."/>
            <person name="Kyrpides N."/>
            <person name="Mikhailova N."/>
            <person name="Reeve W.G."/>
            <person name="Richardson P."/>
        </authorList>
    </citation>
    <scope>NUCLEOTIDE SEQUENCE [LARGE SCALE GENOMIC DNA]</scope>
    <source>
        <strain>WSM419</strain>
    </source>
</reference>
<gene>
    <name evidence="1" type="primary">nuoB</name>
    <name type="ordered locus">Smed_0889</name>
</gene>